<name>ATPB_BUCBP</name>
<gene>
    <name evidence="1" type="primary">atpD</name>
    <name type="ordered locus">bbp_008</name>
</gene>
<comment type="function">
    <text evidence="1">Produces ATP from ADP in the presence of a proton gradient across the membrane. The catalytic sites are hosted primarily by the beta subunits.</text>
</comment>
<comment type="catalytic activity">
    <reaction evidence="1">
        <text>ATP + H2O + 4 H(+)(in) = ADP + phosphate + 5 H(+)(out)</text>
        <dbReference type="Rhea" id="RHEA:57720"/>
        <dbReference type="ChEBI" id="CHEBI:15377"/>
        <dbReference type="ChEBI" id="CHEBI:15378"/>
        <dbReference type="ChEBI" id="CHEBI:30616"/>
        <dbReference type="ChEBI" id="CHEBI:43474"/>
        <dbReference type="ChEBI" id="CHEBI:456216"/>
        <dbReference type="EC" id="7.1.2.2"/>
    </reaction>
</comment>
<comment type="subunit">
    <text evidence="1">F-type ATPases have 2 components, CF(1) - the catalytic core - and CF(0) - the membrane proton channel. CF(1) has five subunits: alpha(3), beta(3), gamma(1), delta(1), epsilon(1). CF(0) has three main subunits: a(1), b(2) and c(9-12). The alpha and beta chains form an alternating ring which encloses part of the gamma chain. CF(1) is attached to CF(0) by a central stalk formed by the gamma and epsilon chains, while a peripheral stalk is formed by the delta and b chains.</text>
</comment>
<comment type="subcellular location">
    <subcellularLocation>
        <location evidence="1">Cell membrane</location>
        <topology evidence="1">Peripheral membrane protein</topology>
    </subcellularLocation>
</comment>
<comment type="similarity">
    <text evidence="1">Belongs to the ATPase alpha/beta chains family.</text>
</comment>
<feature type="chain" id="PRO_0000144428" description="ATP synthase subunit beta">
    <location>
        <begin position="1"/>
        <end position="465"/>
    </location>
</feature>
<feature type="binding site" evidence="1">
    <location>
        <begin position="155"/>
        <end position="162"/>
    </location>
    <ligand>
        <name>ATP</name>
        <dbReference type="ChEBI" id="CHEBI:30616"/>
    </ligand>
</feature>
<reference key="1">
    <citation type="journal article" date="2003" name="Proc. Natl. Acad. Sci. U.S.A.">
        <title>Reductive genome evolution in Buchnera aphidicola.</title>
        <authorList>
            <person name="van Ham R.C.H.J."/>
            <person name="Kamerbeek J."/>
            <person name="Palacios C."/>
            <person name="Rausell C."/>
            <person name="Abascal F."/>
            <person name="Bastolla U."/>
            <person name="Fernandez J.M."/>
            <person name="Jimenez L."/>
            <person name="Postigo M."/>
            <person name="Silva F.J."/>
            <person name="Tamames J."/>
            <person name="Viguera E."/>
            <person name="Latorre A."/>
            <person name="Valencia A."/>
            <person name="Moran F."/>
            <person name="Moya A."/>
        </authorList>
    </citation>
    <scope>NUCLEOTIDE SEQUENCE [LARGE SCALE GENOMIC DNA]</scope>
    <source>
        <strain>Bp</strain>
    </source>
</reference>
<accession>Q89B39</accession>
<keyword id="KW-0066">ATP synthesis</keyword>
<keyword id="KW-0067">ATP-binding</keyword>
<keyword id="KW-1003">Cell membrane</keyword>
<keyword id="KW-0139">CF(1)</keyword>
<keyword id="KW-0375">Hydrogen ion transport</keyword>
<keyword id="KW-0406">Ion transport</keyword>
<keyword id="KW-0472">Membrane</keyword>
<keyword id="KW-0547">Nucleotide-binding</keyword>
<keyword id="KW-1185">Reference proteome</keyword>
<keyword id="KW-1278">Translocase</keyword>
<keyword id="KW-0813">Transport</keyword>
<sequence length="465" mass="51135">MITGKIVQIIGAVVDVEFSQQSVPKIFNALKVDNQGSILILEVQQQLGSGIVRTIAMGSSNGLKRGLLVVDLEHGIKVPVGTATLGRIVNVLGQPIDMKGPLKNHDNSDIEYWEIHRKAPSYSEQLTSYEVLETGIKVIDLICPFSKGGKVGLFGGAGVGKTVNMMELIRNIATEHSGYSVFTGVGERTREGNDFYHEMSDSRVLDKVSLVYGQMNEPPGNRLRVAFTGLTIAEKFRNEGHDVLLFIDNIYRYTLAGTEVSALLGRIPSAVGYQPTLSEEMGVLQERITSTNKGSITSIQAVYVPADDLTDPSPATTFSHLDSTITLSRQIVSLGIYPAIDPLNSTSRQLDPRIVGQLHYDVALGVRSILQRYQELKDIIAILGMDELSEDDKILVSRARKIQKFLSQPFFVAEIFTGFSGKYVKLQDTINGFKDIIEGKVDHVPEQAFYMVGSINEVIEKSKKL</sequence>
<evidence type="ECO:0000255" key="1">
    <source>
        <dbReference type="HAMAP-Rule" id="MF_01347"/>
    </source>
</evidence>
<dbReference type="EC" id="7.1.2.2" evidence="1"/>
<dbReference type="EMBL" id="AE016826">
    <property type="protein sequence ID" value="AAO26752.1"/>
    <property type="molecule type" value="Genomic_DNA"/>
</dbReference>
<dbReference type="RefSeq" id="WP_011091153.1">
    <property type="nucleotide sequence ID" value="NC_004545.1"/>
</dbReference>
<dbReference type="SMR" id="Q89B39"/>
<dbReference type="STRING" id="224915.bbp_008"/>
<dbReference type="KEGG" id="bab:bbp_008"/>
<dbReference type="eggNOG" id="COG0055">
    <property type="taxonomic scope" value="Bacteria"/>
</dbReference>
<dbReference type="HOGENOM" id="CLU_022398_0_2_6"/>
<dbReference type="OrthoDB" id="9801639at2"/>
<dbReference type="Proteomes" id="UP000000601">
    <property type="component" value="Chromosome"/>
</dbReference>
<dbReference type="GO" id="GO:0005886">
    <property type="term" value="C:plasma membrane"/>
    <property type="evidence" value="ECO:0007669"/>
    <property type="project" value="UniProtKB-SubCell"/>
</dbReference>
<dbReference type="GO" id="GO:0045259">
    <property type="term" value="C:proton-transporting ATP synthase complex"/>
    <property type="evidence" value="ECO:0007669"/>
    <property type="project" value="UniProtKB-KW"/>
</dbReference>
<dbReference type="GO" id="GO:0005524">
    <property type="term" value="F:ATP binding"/>
    <property type="evidence" value="ECO:0007669"/>
    <property type="project" value="UniProtKB-UniRule"/>
</dbReference>
<dbReference type="GO" id="GO:0016887">
    <property type="term" value="F:ATP hydrolysis activity"/>
    <property type="evidence" value="ECO:0007669"/>
    <property type="project" value="InterPro"/>
</dbReference>
<dbReference type="GO" id="GO:0046933">
    <property type="term" value="F:proton-transporting ATP synthase activity, rotational mechanism"/>
    <property type="evidence" value="ECO:0007669"/>
    <property type="project" value="UniProtKB-UniRule"/>
</dbReference>
<dbReference type="CDD" id="cd18110">
    <property type="entry name" value="ATP-synt_F1_beta_C"/>
    <property type="match status" value="1"/>
</dbReference>
<dbReference type="CDD" id="cd18115">
    <property type="entry name" value="ATP-synt_F1_beta_N"/>
    <property type="match status" value="1"/>
</dbReference>
<dbReference type="CDD" id="cd01133">
    <property type="entry name" value="F1-ATPase_beta_CD"/>
    <property type="match status" value="1"/>
</dbReference>
<dbReference type="FunFam" id="1.10.1140.10:FF:000001">
    <property type="entry name" value="ATP synthase subunit beta"/>
    <property type="match status" value="1"/>
</dbReference>
<dbReference type="FunFam" id="3.40.50.300:FF:000004">
    <property type="entry name" value="ATP synthase subunit beta"/>
    <property type="match status" value="1"/>
</dbReference>
<dbReference type="Gene3D" id="2.40.10.170">
    <property type="match status" value="1"/>
</dbReference>
<dbReference type="Gene3D" id="1.10.1140.10">
    <property type="entry name" value="Bovine Mitochondrial F1-atpase, Atp Synthase Beta Chain, Chain D, domain 3"/>
    <property type="match status" value="1"/>
</dbReference>
<dbReference type="Gene3D" id="3.40.50.300">
    <property type="entry name" value="P-loop containing nucleotide triphosphate hydrolases"/>
    <property type="match status" value="1"/>
</dbReference>
<dbReference type="HAMAP" id="MF_01347">
    <property type="entry name" value="ATP_synth_beta_bact"/>
    <property type="match status" value="1"/>
</dbReference>
<dbReference type="InterPro" id="IPR003593">
    <property type="entry name" value="AAA+_ATPase"/>
</dbReference>
<dbReference type="InterPro" id="IPR055190">
    <property type="entry name" value="ATP-synt_VA_C"/>
</dbReference>
<dbReference type="InterPro" id="IPR005722">
    <property type="entry name" value="ATP_synth_F1_bsu"/>
</dbReference>
<dbReference type="InterPro" id="IPR020003">
    <property type="entry name" value="ATPase_a/bsu_AS"/>
</dbReference>
<dbReference type="InterPro" id="IPR050053">
    <property type="entry name" value="ATPase_alpha/beta_chains"/>
</dbReference>
<dbReference type="InterPro" id="IPR004100">
    <property type="entry name" value="ATPase_F1/V1/A1_a/bsu_N"/>
</dbReference>
<dbReference type="InterPro" id="IPR036121">
    <property type="entry name" value="ATPase_F1/V1/A1_a/bsu_N_sf"/>
</dbReference>
<dbReference type="InterPro" id="IPR000194">
    <property type="entry name" value="ATPase_F1/V1/A1_a/bsu_nucl-bd"/>
</dbReference>
<dbReference type="InterPro" id="IPR024034">
    <property type="entry name" value="ATPase_F1/V1_b/a_C"/>
</dbReference>
<dbReference type="InterPro" id="IPR027417">
    <property type="entry name" value="P-loop_NTPase"/>
</dbReference>
<dbReference type="NCBIfam" id="TIGR01039">
    <property type="entry name" value="atpD"/>
    <property type="match status" value="1"/>
</dbReference>
<dbReference type="PANTHER" id="PTHR15184">
    <property type="entry name" value="ATP SYNTHASE"/>
    <property type="match status" value="1"/>
</dbReference>
<dbReference type="PANTHER" id="PTHR15184:SF71">
    <property type="entry name" value="ATP SYNTHASE SUBUNIT BETA, MITOCHONDRIAL"/>
    <property type="match status" value="1"/>
</dbReference>
<dbReference type="Pfam" id="PF00006">
    <property type="entry name" value="ATP-synt_ab"/>
    <property type="match status" value="1"/>
</dbReference>
<dbReference type="Pfam" id="PF02874">
    <property type="entry name" value="ATP-synt_ab_N"/>
    <property type="match status" value="1"/>
</dbReference>
<dbReference type="Pfam" id="PF22919">
    <property type="entry name" value="ATP-synt_VA_C"/>
    <property type="match status" value="1"/>
</dbReference>
<dbReference type="SMART" id="SM00382">
    <property type="entry name" value="AAA"/>
    <property type="match status" value="1"/>
</dbReference>
<dbReference type="SUPFAM" id="SSF47917">
    <property type="entry name" value="C-terminal domain of alpha and beta subunits of F1 ATP synthase"/>
    <property type="match status" value="1"/>
</dbReference>
<dbReference type="SUPFAM" id="SSF50615">
    <property type="entry name" value="N-terminal domain of alpha and beta subunits of F1 ATP synthase"/>
    <property type="match status" value="1"/>
</dbReference>
<dbReference type="SUPFAM" id="SSF52540">
    <property type="entry name" value="P-loop containing nucleoside triphosphate hydrolases"/>
    <property type="match status" value="1"/>
</dbReference>
<dbReference type="PROSITE" id="PS00152">
    <property type="entry name" value="ATPASE_ALPHA_BETA"/>
    <property type="match status" value="1"/>
</dbReference>
<proteinExistence type="inferred from homology"/>
<organism>
    <name type="scientific">Buchnera aphidicola subsp. Baizongia pistaciae (strain Bp)</name>
    <dbReference type="NCBI Taxonomy" id="224915"/>
    <lineage>
        <taxon>Bacteria</taxon>
        <taxon>Pseudomonadati</taxon>
        <taxon>Pseudomonadota</taxon>
        <taxon>Gammaproteobacteria</taxon>
        <taxon>Enterobacterales</taxon>
        <taxon>Erwiniaceae</taxon>
        <taxon>Buchnera</taxon>
    </lineage>
</organism>
<protein>
    <recommendedName>
        <fullName evidence="1">ATP synthase subunit beta</fullName>
        <ecNumber evidence="1">7.1.2.2</ecNumber>
    </recommendedName>
    <alternativeName>
        <fullName evidence="1">ATP synthase F1 sector subunit beta</fullName>
    </alternativeName>
    <alternativeName>
        <fullName evidence="1">F-ATPase subunit beta</fullName>
    </alternativeName>
</protein>